<comment type="function">
    <text evidence="4 5">Responsible for specific up-regulation of the translocon genes TOC33 and TOC75 in leaves. Involved in the general chloroplast protein import pathway regulation, including protein import and protein translation efficiencies.</text>
</comment>
<comment type="interaction">
    <interactant intactId="EBI-4435051">
        <id>Q9LU68</id>
    </interactant>
    <interactant intactId="EBI-15191571">
        <id>Q4PSE2</id>
        <label>NFYC8</label>
    </interactant>
    <organismsDiffer>false</organismsDiffer>
    <experiments>3</experiments>
</comment>
<comment type="subcellular location">
    <subcellularLocation>
        <location evidence="8">Plastid</location>
        <location evidence="8">Chloroplast</location>
    </subcellularLocation>
    <subcellularLocation>
        <location evidence="2 4">Nucleus</location>
    </subcellularLocation>
</comment>
<comment type="alternative products">
    <event type="alternative splicing"/>
    <isoform>
        <id>Q9LU68-1</id>
        <name>1</name>
        <sequence type="displayed"/>
    </isoform>
    <isoform>
        <id>Q9LU68-2</id>
        <name>2</name>
        <sequence type="described" ref="VSP_037773"/>
    </isoform>
    <isoform>
        <id>Q9LU68-3</id>
        <name>3</name>
        <sequence type="described" ref="VSP_037772"/>
    </isoform>
</comment>
<comment type="tissue specificity">
    <text evidence="4">Expressed in leaves and young flower buds.</text>
</comment>
<comment type="disruption phenotype">
    <text evidence="4">Pale phenotype. Defective in the general chloroplast protein import pathway.</text>
</comment>
<comment type="miscellaneous">
    <molecule>Isoform 2</molecule>
    <text evidence="8">May be due to an intron retention.</text>
</comment>
<gene>
    <name type="primary">CIA2</name>
    <name type="ordered locus">At5g57180</name>
    <name type="ORF">MUL3.13</name>
</gene>
<organism>
    <name type="scientific">Arabidopsis thaliana</name>
    <name type="common">Mouse-ear cress</name>
    <dbReference type="NCBI Taxonomy" id="3702"/>
    <lineage>
        <taxon>Eukaryota</taxon>
        <taxon>Viridiplantae</taxon>
        <taxon>Streptophyta</taxon>
        <taxon>Embryophyta</taxon>
        <taxon>Tracheophyta</taxon>
        <taxon>Spermatophyta</taxon>
        <taxon>Magnoliopsida</taxon>
        <taxon>eudicotyledons</taxon>
        <taxon>Gunneridae</taxon>
        <taxon>Pentapetalae</taxon>
        <taxon>rosids</taxon>
        <taxon>malvids</taxon>
        <taxon>Brassicales</taxon>
        <taxon>Brassicaceae</taxon>
        <taxon>Camelineae</taxon>
        <taxon>Arabidopsis</taxon>
    </lineage>
</organism>
<evidence type="ECO:0000255" key="1"/>
<evidence type="ECO:0000255" key="2">
    <source>
        <dbReference type="PROSITE-ProRule" id="PRU00357"/>
    </source>
</evidence>
<evidence type="ECO:0000256" key="3">
    <source>
        <dbReference type="SAM" id="MobiDB-lite"/>
    </source>
</evidence>
<evidence type="ECO:0000269" key="4">
    <source>
    </source>
</evidence>
<evidence type="ECO:0000269" key="5">
    <source>
    </source>
</evidence>
<evidence type="ECO:0000303" key="6">
    <source>
    </source>
</evidence>
<evidence type="ECO:0000303" key="7">
    <source ref="6"/>
</evidence>
<evidence type="ECO:0000305" key="8"/>
<proteinExistence type="evidence at protein level"/>
<sequence>MSACLSSGGGGAAAYSFELEKVKSPPPSSSTTTTRATSPSSTISESSNSPLAISTRKPRTQRKRPNQTYNEAATLLSTAYPNIFSSNLSSKQKTHSSSNSHFYGPLLSDNDDASDLLLPYESIEEPDFLFHPTIQTKTEFFSDQKEVNSGGDCYGGEIEKFDFSDEFDAESILDEDIEEGIDSIMGTVVESNSNSGIYESRVPGMINRGGRSSSNRIGKLEQMMMINSWNRSSNGFNFPLGLGLRSALRENDDTKLWKIHTVDFEQISPRIQTVKTETAISTVDEEKSDGKKVVISGEKSNKKKKKKKMTVTTTLITESKSLEDTEETSLKRTGPLLKLDYDGVLEAWSDKTSPFPDEIQGSEAVDVNARLAQIDLFGDSGMREASVLRYKEKRRTRLFSKKIRYQVRKLNADQRPRMKGRFVRRPNESTPSGQR</sequence>
<name>CIA2_ARATH</name>
<protein>
    <recommendedName>
        <fullName>Protein CHLOROPLAST IMPORT APPARATUS 2</fullName>
    </recommendedName>
</protein>
<feature type="transit peptide" description="Chloroplast" evidence="1">
    <location>
        <begin position="1"/>
        <end position="59"/>
    </location>
</feature>
<feature type="chain" id="PRO_0000380110" description="Protein CHLOROPLAST IMPORT APPARATUS 2">
    <location>
        <begin position="60"/>
        <end position="435"/>
    </location>
</feature>
<feature type="domain" description="CCT" evidence="2">
    <location>
        <begin position="383"/>
        <end position="425"/>
    </location>
</feature>
<feature type="region of interest" description="Disordered" evidence="3">
    <location>
        <begin position="21"/>
        <end position="66"/>
    </location>
</feature>
<feature type="region of interest" description="Disordered" evidence="3">
    <location>
        <begin position="412"/>
        <end position="435"/>
    </location>
</feature>
<feature type="compositionally biased region" description="Low complexity" evidence="3">
    <location>
        <begin position="29"/>
        <end position="49"/>
    </location>
</feature>
<feature type="compositionally biased region" description="Basic residues" evidence="3">
    <location>
        <begin position="56"/>
        <end position="65"/>
    </location>
</feature>
<feature type="splice variant" id="VSP_037772" description="In isoform 3." evidence="7">
    <original>ARLAQIDL</original>
    <variation>VCLTLISS</variation>
    <location>
        <begin position="369"/>
        <end position="376"/>
    </location>
</feature>
<feature type="splice variant" id="VSP_037773" description="In isoform 2." evidence="6">
    <original>GRFVRRPNEST</original>
    <variation>VSN</variation>
    <location>
        <begin position="420"/>
        <end position="430"/>
    </location>
</feature>
<reference key="1">
    <citation type="journal article" date="2001" name="Plant Cell">
        <title>Leaf-specific upregulation of chloroplast translocon genes by a CCT motif-containing protein, CIA2.</title>
        <authorList>
            <person name="Sun C.-W."/>
            <person name="Chen L.-J."/>
            <person name="Lin L.-C."/>
            <person name="Li H.-M."/>
        </authorList>
    </citation>
    <scope>NUCLEOTIDE SEQUENCE [MRNA] (ISOFORM 1)</scope>
    <scope>FUNCTION</scope>
    <scope>DISRUPTION PHENOTYPE</scope>
    <scope>SUBCELLULAR LOCATION</scope>
    <scope>TISSUE SPECIFICITY</scope>
    <scope>INDUCTION</scope>
</reference>
<reference key="2">
    <citation type="journal article" date="2000" name="DNA Res.">
        <title>Structural analysis of Arabidopsis thaliana chromosome 5. X. Sequence features of the regions of 3,076,755 bp covered by sixty P1 and TAC clones.</title>
        <authorList>
            <person name="Sato S."/>
            <person name="Nakamura Y."/>
            <person name="Kaneko T."/>
            <person name="Katoh T."/>
            <person name="Asamizu E."/>
            <person name="Kotani H."/>
            <person name="Tabata S."/>
        </authorList>
    </citation>
    <scope>NUCLEOTIDE SEQUENCE [LARGE SCALE GENOMIC DNA]</scope>
    <source>
        <strain>cv. Columbia</strain>
    </source>
</reference>
<reference key="3">
    <citation type="journal article" date="2017" name="Plant J.">
        <title>Araport11: a complete reannotation of the Arabidopsis thaliana reference genome.</title>
        <authorList>
            <person name="Cheng C.Y."/>
            <person name="Krishnakumar V."/>
            <person name="Chan A.P."/>
            <person name="Thibaud-Nissen F."/>
            <person name="Schobel S."/>
            <person name="Town C.D."/>
        </authorList>
    </citation>
    <scope>GENOME REANNOTATION</scope>
    <source>
        <strain>cv. Columbia</strain>
    </source>
</reference>
<reference key="4">
    <citation type="journal article" date="2003" name="Science">
        <title>Empirical analysis of transcriptional activity in the Arabidopsis genome.</title>
        <authorList>
            <person name="Yamada K."/>
            <person name="Lim J."/>
            <person name="Dale J.M."/>
            <person name="Chen H."/>
            <person name="Shinn P."/>
            <person name="Palm C.J."/>
            <person name="Southwick A.M."/>
            <person name="Wu H.C."/>
            <person name="Kim C.J."/>
            <person name="Nguyen M."/>
            <person name="Pham P.K."/>
            <person name="Cheuk R.F."/>
            <person name="Karlin-Newmann G."/>
            <person name="Liu S.X."/>
            <person name="Lam B."/>
            <person name="Sakano H."/>
            <person name="Wu T."/>
            <person name="Yu G."/>
            <person name="Miranda M."/>
            <person name="Quach H.L."/>
            <person name="Tripp M."/>
            <person name="Chang C.H."/>
            <person name="Lee J.M."/>
            <person name="Toriumi M.J."/>
            <person name="Chan M.M."/>
            <person name="Tang C.C."/>
            <person name="Onodera C.S."/>
            <person name="Deng J.M."/>
            <person name="Akiyama K."/>
            <person name="Ansari Y."/>
            <person name="Arakawa T."/>
            <person name="Banh J."/>
            <person name="Banno F."/>
            <person name="Bowser L."/>
            <person name="Brooks S.Y."/>
            <person name="Carninci P."/>
            <person name="Chao Q."/>
            <person name="Choy N."/>
            <person name="Enju A."/>
            <person name="Goldsmith A.D."/>
            <person name="Gurjal M."/>
            <person name="Hansen N.F."/>
            <person name="Hayashizaki Y."/>
            <person name="Johnson-Hopson C."/>
            <person name="Hsuan V.W."/>
            <person name="Iida K."/>
            <person name="Karnes M."/>
            <person name="Khan S."/>
            <person name="Koesema E."/>
            <person name="Ishida J."/>
            <person name="Jiang P.X."/>
            <person name="Jones T."/>
            <person name="Kawai J."/>
            <person name="Kamiya A."/>
            <person name="Meyers C."/>
            <person name="Nakajima M."/>
            <person name="Narusaka M."/>
            <person name="Seki M."/>
            <person name="Sakurai T."/>
            <person name="Satou M."/>
            <person name="Tamse R."/>
            <person name="Vaysberg M."/>
            <person name="Wallender E.K."/>
            <person name="Wong C."/>
            <person name="Yamamura Y."/>
            <person name="Yuan S."/>
            <person name="Shinozaki K."/>
            <person name="Davis R.W."/>
            <person name="Theologis A."/>
            <person name="Ecker J.R."/>
        </authorList>
    </citation>
    <scope>NUCLEOTIDE SEQUENCE [LARGE SCALE MRNA] (ISOFORM 2)</scope>
    <source>
        <strain>cv. Columbia</strain>
    </source>
</reference>
<reference key="5">
    <citation type="journal article" date="2009" name="DNA Res.">
        <title>Analysis of multiple occurrences of alternative splicing events in Arabidopsis thaliana using novel sequenced full-length cDNAs.</title>
        <authorList>
            <person name="Iida K."/>
            <person name="Fukami-Kobayashi K."/>
            <person name="Toyoda A."/>
            <person name="Sakaki Y."/>
            <person name="Kobayashi M."/>
            <person name="Seki M."/>
            <person name="Shinozaki K."/>
        </authorList>
    </citation>
    <scope>NUCLEOTIDE SEQUENCE [LARGE SCALE MRNA] (ISOFORM 1)</scope>
    <source>
        <tissue>Rosette leaf</tissue>
    </source>
</reference>
<reference key="6">
    <citation type="submission" date="2005-03" db="EMBL/GenBank/DDBJ databases">
        <title>Large-scale analysis of RIKEN Arabidopsis full-length (RAFL) cDNAs.</title>
        <authorList>
            <person name="Totoki Y."/>
            <person name="Seki M."/>
            <person name="Ishida J."/>
            <person name="Nakajima M."/>
            <person name="Enju A."/>
            <person name="Kamiya A."/>
            <person name="Narusaka M."/>
            <person name="Shin-i T."/>
            <person name="Nakagawa M."/>
            <person name="Sakamoto N."/>
            <person name="Oishi K."/>
            <person name="Kohara Y."/>
            <person name="Kobayashi M."/>
            <person name="Toyoda A."/>
            <person name="Sakaki Y."/>
            <person name="Sakurai T."/>
            <person name="Iida K."/>
            <person name="Akiyama K."/>
            <person name="Satou M."/>
            <person name="Toyoda T."/>
            <person name="Konagaya A."/>
            <person name="Carninci P."/>
            <person name="Kawai J."/>
            <person name="Hayashizaki Y."/>
            <person name="Shinozaki K."/>
        </authorList>
    </citation>
    <scope>NUCLEOTIDE SEQUENCE [LARGE SCALE MRNA] (ISOFORM 3)</scope>
    <source>
        <strain>cv. Columbia</strain>
    </source>
</reference>
<reference key="7">
    <citation type="journal article" date="2009" name="Plant Physiol.">
        <title>CIA2 coordinately up-regulates protein import and synthesis in leaf chloroplasts.</title>
        <authorList>
            <person name="Sun C.-W."/>
            <person name="Huang Y.-C."/>
            <person name="Chang H.-Y."/>
        </authorList>
    </citation>
    <scope>FUNCTION</scope>
</reference>
<accession>Q9LU68</accession>
<accession>Q56Y02</accession>
<accession>Q94JU7</accession>
<dbReference type="EMBL" id="AF359387">
    <property type="protein sequence ID" value="AAK51445.1"/>
    <property type="molecule type" value="mRNA"/>
</dbReference>
<dbReference type="EMBL" id="AB023042">
    <property type="protein sequence ID" value="BAA97368.1"/>
    <property type="molecule type" value="Genomic_DNA"/>
</dbReference>
<dbReference type="EMBL" id="CP002688">
    <property type="protein sequence ID" value="AED96860.1"/>
    <property type="molecule type" value="Genomic_DNA"/>
</dbReference>
<dbReference type="EMBL" id="AF372929">
    <property type="protein sequence ID" value="AAK50069.1"/>
    <property type="molecule type" value="mRNA"/>
</dbReference>
<dbReference type="EMBL" id="AY078036">
    <property type="protein sequence ID" value="AAL77737.1"/>
    <property type="molecule type" value="mRNA"/>
</dbReference>
<dbReference type="EMBL" id="AK316813">
    <property type="protein sequence ID" value="BAH19527.1"/>
    <property type="molecule type" value="mRNA"/>
</dbReference>
<dbReference type="EMBL" id="AK221521">
    <property type="protein sequence ID" value="BAD94809.1"/>
    <property type="molecule type" value="mRNA"/>
</dbReference>
<dbReference type="RefSeq" id="NP_001032087.1">
    <property type="nucleotide sequence ID" value="NM_001037010.2"/>
</dbReference>
<dbReference type="RefSeq" id="NP_001332283.1">
    <property type="nucleotide sequence ID" value="NM_001345246.1"/>
</dbReference>
<dbReference type="RefSeq" id="NP_568852.2">
    <molecule id="Q9LU68-1"/>
    <property type="nucleotide sequence ID" value="NM_125100.4"/>
</dbReference>
<dbReference type="RefSeq" id="NP_851201.1">
    <property type="nucleotide sequence ID" value="NM_180870.2"/>
</dbReference>
<dbReference type="SMR" id="Q9LU68"/>
<dbReference type="BioGRID" id="21068">
    <property type="interactions" value="26"/>
</dbReference>
<dbReference type="FunCoup" id="Q9LU68">
    <property type="interactions" value="880"/>
</dbReference>
<dbReference type="IntAct" id="Q9LU68">
    <property type="interactions" value="26"/>
</dbReference>
<dbReference type="STRING" id="3702.Q9LU68"/>
<dbReference type="GlyGen" id="Q9LU68">
    <property type="glycosylation" value="1 site"/>
</dbReference>
<dbReference type="iPTMnet" id="Q9LU68"/>
<dbReference type="PaxDb" id="3702-AT5G57180.2"/>
<dbReference type="ProteomicsDB" id="246893">
    <molecule id="Q9LU68-1"/>
</dbReference>
<dbReference type="EnsemblPlants" id="AT5G57180.2">
    <molecule id="Q9LU68-1"/>
    <property type="protein sequence ID" value="AT5G57180.2"/>
    <property type="gene ID" value="AT5G57180"/>
</dbReference>
<dbReference type="GeneID" id="835824"/>
<dbReference type="Gramene" id="AT5G57180.2">
    <molecule id="Q9LU68-1"/>
    <property type="protein sequence ID" value="AT5G57180.2"/>
    <property type="gene ID" value="AT5G57180"/>
</dbReference>
<dbReference type="KEGG" id="ath:AT5G57180"/>
<dbReference type="Araport" id="AT5G57180"/>
<dbReference type="TAIR" id="AT5G57180">
    <property type="gene designation" value="CIA2"/>
</dbReference>
<dbReference type="eggNOG" id="KOG1601">
    <property type="taxonomic scope" value="Eukaryota"/>
</dbReference>
<dbReference type="InParanoid" id="Q9LU68"/>
<dbReference type="OMA" id="DFDDDCF"/>
<dbReference type="PhylomeDB" id="Q9LU68"/>
<dbReference type="PRO" id="PR:Q9LU68"/>
<dbReference type="Proteomes" id="UP000006548">
    <property type="component" value="Chromosome 5"/>
</dbReference>
<dbReference type="ExpressionAtlas" id="Q9LU68">
    <property type="expression patterns" value="baseline and differential"/>
</dbReference>
<dbReference type="GO" id="GO:0009507">
    <property type="term" value="C:chloroplast"/>
    <property type="evidence" value="ECO:0007669"/>
    <property type="project" value="UniProtKB-SubCell"/>
</dbReference>
<dbReference type="GO" id="GO:0005634">
    <property type="term" value="C:nucleus"/>
    <property type="evidence" value="ECO:0000314"/>
    <property type="project" value="TAIR"/>
</dbReference>
<dbReference type="GO" id="GO:0045036">
    <property type="term" value="P:protein targeting to chloroplast"/>
    <property type="evidence" value="ECO:0000315"/>
    <property type="project" value="TAIR"/>
</dbReference>
<dbReference type="GO" id="GO:0006355">
    <property type="term" value="P:regulation of DNA-templated transcription"/>
    <property type="evidence" value="ECO:0000270"/>
    <property type="project" value="TAIR"/>
</dbReference>
<dbReference type="InterPro" id="IPR010402">
    <property type="entry name" value="CCT_domain"/>
</dbReference>
<dbReference type="InterPro" id="IPR052453">
    <property type="entry name" value="CONSTANS-like_ZF"/>
</dbReference>
<dbReference type="PANTHER" id="PTHR31874">
    <property type="entry name" value="CCT MOTIF FAMILY PROTEIN, EXPRESSED"/>
    <property type="match status" value="1"/>
</dbReference>
<dbReference type="PANTHER" id="PTHR31874:SF10">
    <property type="entry name" value="PROTEIN CHLOROPLAST IMPORT APPARATUS 2"/>
    <property type="match status" value="1"/>
</dbReference>
<dbReference type="Pfam" id="PF06203">
    <property type="entry name" value="CCT"/>
    <property type="match status" value="1"/>
</dbReference>
<dbReference type="PROSITE" id="PS51017">
    <property type="entry name" value="CCT"/>
    <property type="match status" value="1"/>
</dbReference>
<keyword id="KW-0025">Alternative splicing</keyword>
<keyword id="KW-0150">Chloroplast</keyword>
<keyword id="KW-0539">Nucleus</keyword>
<keyword id="KW-0934">Plastid</keyword>
<keyword id="KW-1185">Reference proteome</keyword>
<keyword id="KW-0809">Transit peptide</keyword>